<organism>
    <name type="scientific">Staphylococcus aureus (strain MRSA252)</name>
    <dbReference type="NCBI Taxonomy" id="282458"/>
    <lineage>
        <taxon>Bacteria</taxon>
        <taxon>Bacillati</taxon>
        <taxon>Bacillota</taxon>
        <taxon>Bacilli</taxon>
        <taxon>Bacillales</taxon>
        <taxon>Staphylococcaceae</taxon>
        <taxon>Staphylococcus</taxon>
    </lineage>
</organism>
<reference key="1">
    <citation type="journal article" date="2004" name="Proc. Natl. Acad. Sci. U.S.A.">
        <title>Complete genomes of two clinical Staphylococcus aureus strains: evidence for the rapid evolution of virulence and drug resistance.</title>
        <authorList>
            <person name="Holden M.T.G."/>
            <person name="Feil E.J."/>
            <person name="Lindsay J.A."/>
            <person name="Peacock S.J."/>
            <person name="Day N.P.J."/>
            <person name="Enright M.C."/>
            <person name="Foster T.J."/>
            <person name="Moore C.E."/>
            <person name="Hurst L."/>
            <person name="Atkin R."/>
            <person name="Barron A."/>
            <person name="Bason N."/>
            <person name="Bentley S.D."/>
            <person name="Chillingworth C."/>
            <person name="Chillingworth T."/>
            <person name="Churcher C."/>
            <person name="Clark L."/>
            <person name="Corton C."/>
            <person name="Cronin A."/>
            <person name="Doggett J."/>
            <person name="Dowd L."/>
            <person name="Feltwell T."/>
            <person name="Hance Z."/>
            <person name="Harris B."/>
            <person name="Hauser H."/>
            <person name="Holroyd S."/>
            <person name="Jagels K."/>
            <person name="James K.D."/>
            <person name="Lennard N."/>
            <person name="Line A."/>
            <person name="Mayes R."/>
            <person name="Moule S."/>
            <person name="Mungall K."/>
            <person name="Ormond D."/>
            <person name="Quail M.A."/>
            <person name="Rabbinowitsch E."/>
            <person name="Rutherford K.M."/>
            <person name="Sanders M."/>
            <person name="Sharp S."/>
            <person name="Simmonds M."/>
            <person name="Stevens K."/>
            <person name="Whitehead S."/>
            <person name="Barrell B.G."/>
            <person name="Spratt B.G."/>
            <person name="Parkhill J."/>
        </authorList>
    </citation>
    <scope>NUCLEOTIDE SEQUENCE [LARGE SCALE GENOMIC DNA]</scope>
    <source>
        <strain>MRSA252</strain>
    </source>
</reference>
<name>ADPRH_STAAR</name>
<evidence type="ECO:0000250" key="1">
    <source>
        <dbReference type="UniProtKB" id="P0DN70"/>
    </source>
</evidence>
<evidence type="ECO:0000250" key="2">
    <source>
        <dbReference type="UniProtKB" id="P67343"/>
    </source>
</evidence>
<evidence type="ECO:0000255" key="3">
    <source>
        <dbReference type="PROSITE-ProRule" id="PRU00490"/>
    </source>
</evidence>
<evidence type="ECO:0000305" key="4"/>
<sequence length="266" mass="30135">METLKSNKARLEYLINDMRRERNDNDVLVMPSSFEDLWELYRGLANVRPALPVSDEYLAVQDAMLSDLNRQHVTDLKDLKPIKGDNIFVWQGDITTLKIDAIVNAANSRFLGCMQANHDCIDNIIHTKAGVQVRLDCAEIIRQQGRNEGVGKAKITRGYNLPAKYIIHTVGPQIRRLPVSKLNQDLLAKCYLSCLKLADQQSLNHIAFCCISTGVFAFPQDEAAEIAVRTVESYLKETNSTLKVVFNVFTDKDLQLYKEAFNRDAE</sequence>
<keyword id="KW-0326">Glycosidase</keyword>
<keyword id="KW-0378">Hydrolase</keyword>
<keyword id="KW-0479">Metal-binding</keyword>
<keyword id="KW-0862">Zinc</keyword>
<protein>
    <recommendedName>
        <fullName evidence="2">Protein-ADP-ribose hydrolase</fullName>
        <ecNumber evidence="2">3.2.1.-</ecNumber>
    </recommendedName>
</protein>
<dbReference type="EC" id="3.2.1.-" evidence="2"/>
<dbReference type="EMBL" id="BX571856">
    <property type="protein sequence ID" value="CAG39346.1"/>
    <property type="molecule type" value="Genomic_DNA"/>
</dbReference>
<dbReference type="RefSeq" id="WP_000449073.1">
    <property type="nucleotide sequence ID" value="NC_002952.2"/>
</dbReference>
<dbReference type="SMR" id="Q6GJZ1"/>
<dbReference type="KEGG" id="sar:SAR0322"/>
<dbReference type="HOGENOM" id="CLU_046550_2_1_9"/>
<dbReference type="Proteomes" id="UP000000596">
    <property type="component" value="Chromosome"/>
</dbReference>
<dbReference type="GO" id="GO:0016798">
    <property type="term" value="F:hydrolase activity, acting on glycosyl bonds"/>
    <property type="evidence" value="ECO:0007669"/>
    <property type="project" value="UniProtKB-KW"/>
</dbReference>
<dbReference type="CDD" id="cd02908">
    <property type="entry name" value="Macro_OAADPr_deacetylase"/>
    <property type="match status" value="1"/>
</dbReference>
<dbReference type="FunFam" id="3.40.220.10:FF:000018">
    <property type="entry name" value="Protein-ADP-ribose hydrolase"/>
    <property type="match status" value="1"/>
</dbReference>
<dbReference type="Gene3D" id="3.40.220.10">
    <property type="entry name" value="Leucine Aminopeptidase, subunit E, domain 1"/>
    <property type="match status" value="1"/>
</dbReference>
<dbReference type="InterPro" id="IPR002589">
    <property type="entry name" value="Macro_dom"/>
</dbReference>
<dbReference type="InterPro" id="IPR043472">
    <property type="entry name" value="Macro_dom-like"/>
</dbReference>
<dbReference type="NCBIfam" id="NF003163">
    <property type="entry name" value="PRK04143.1"/>
    <property type="match status" value="1"/>
</dbReference>
<dbReference type="PANTHER" id="PTHR11106">
    <property type="entry name" value="GANGLIOSIDE INDUCED DIFFERENTIATION ASSOCIATED PROTEIN 2-RELATED"/>
    <property type="match status" value="1"/>
</dbReference>
<dbReference type="PANTHER" id="PTHR11106:SF27">
    <property type="entry name" value="MACRO DOMAIN-CONTAINING PROTEIN"/>
    <property type="match status" value="1"/>
</dbReference>
<dbReference type="Pfam" id="PF01661">
    <property type="entry name" value="Macro"/>
    <property type="match status" value="1"/>
</dbReference>
<dbReference type="SMART" id="SM00506">
    <property type="entry name" value="A1pp"/>
    <property type="match status" value="1"/>
</dbReference>
<dbReference type="SUPFAM" id="SSF52949">
    <property type="entry name" value="Macro domain-like"/>
    <property type="match status" value="1"/>
</dbReference>
<dbReference type="PROSITE" id="PS51154">
    <property type="entry name" value="MACRO"/>
    <property type="match status" value="1"/>
</dbReference>
<feature type="chain" id="PRO_0000089211" description="Protein-ADP-ribose hydrolase">
    <location>
        <begin position="1"/>
        <end position="266"/>
    </location>
</feature>
<feature type="domain" description="Macro" evidence="3">
    <location>
        <begin position="74"/>
        <end position="265"/>
    </location>
</feature>
<feature type="binding site" evidence="1">
    <location>
        <position position="93"/>
    </location>
    <ligand>
        <name>ADP-D-ribose</name>
        <dbReference type="ChEBI" id="CHEBI:57967"/>
    </ligand>
</feature>
<feature type="binding site" evidence="1">
    <location>
        <position position="94"/>
    </location>
    <ligand>
        <name>ADP-D-ribose</name>
        <dbReference type="ChEBI" id="CHEBI:57967"/>
    </ligand>
</feature>
<feature type="binding site" evidence="1">
    <location>
        <position position="107"/>
    </location>
    <ligand>
        <name>ADP-D-ribose</name>
        <dbReference type="ChEBI" id="CHEBI:57967"/>
    </ligand>
</feature>
<feature type="binding site" evidence="1">
    <location>
        <position position="113"/>
    </location>
    <ligand>
        <name>Zn(2+)</name>
        <dbReference type="ChEBI" id="CHEBI:29105"/>
    </ligand>
</feature>
<feature type="binding site" evidence="1">
    <location>
        <position position="118"/>
    </location>
    <ligand>
        <name>Zn(2+)</name>
        <dbReference type="ChEBI" id="CHEBI:29105"/>
    </ligand>
</feature>
<feature type="binding site" evidence="1">
    <location>
        <position position="120"/>
    </location>
    <ligand>
        <name>ADP-D-ribose</name>
        <dbReference type="ChEBI" id="CHEBI:57967"/>
    </ligand>
</feature>
<feature type="binding site" evidence="1">
    <location>
        <position position="120"/>
    </location>
    <ligand>
        <name>Zn(2+)</name>
        <dbReference type="ChEBI" id="CHEBI:29105"/>
    </ligand>
</feature>
<feature type="binding site" evidence="1">
    <location>
        <position position="121"/>
    </location>
    <ligand>
        <name>ADP-D-ribose</name>
        <dbReference type="ChEBI" id="CHEBI:57967"/>
    </ligand>
</feature>
<feature type="binding site" evidence="1">
    <location>
        <position position="122"/>
    </location>
    <ligand>
        <name>ADP-D-ribose</name>
        <dbReference type="ChEBI" id="CHEBI:57967"/>
    </ligand>
</feature>
<feature type="binding site" evidence="1">
    <location>
        <position position="212"/>
    </location>
    <ligand>
        <name>ADP-D-ribose</name>
        <dbReference type="ChEBI" id="CHEBI:57967"/>
    </ligand>
</feature>
<feature type="binding site" evidence="1">
    <location>
        <position position="213"/>
    </location>
    <ligand>
        <name>ADP-D-ribose</name>
        <dbReference type="ChEBI" id="CHEBI:57967"/>
    </ligand>
</feature>
<feature type="binding site" evidence="1">
    <location>
        <position position="214"/>
    </location>
    <ligand>
        <name>ADP-D-ribose</name>
        <dbReference type="ChEBI" id="CHEBI:57967"/>
    </ligand>
</feature>
<feature type="binding site" evidence="1">
    <location>
        <position position="216"/>
    </location>
    <ligand>
        <name>ADP-D-ribose</name>
        <dbReference type="ChEBI" id="CHEBI:57967"/>
    </ligand>
</feature>
<proteinExistence type="inferred from homology"/>
<comment type="function">
    <text evidence="2">ADP-ribosylhydrolase that specifically reverses the SirTM-mediated mono-ADP-ribosylation at an asparatate residue of GcvH-L, by releasing ADP-ribose from the target protein (By similarity). May play a role in the regulation of the response to host-induced oxidative stress (By similarity).</text>
</comment>
<comment type="catalytic activity">
    <reaction evidence="2">
        <text>4-O-(ADP-D-ribosyl)-L-aspartyl-[protein] + H2O = L-aspartyl-[protein] + ADP-D-ribose + H(+)</text>
        <dbReference type="Rhea" id="RHEA:54428"/>
        <dbReference type="Rhea" id="RHEA-COMP:9867"/>
        <dbReference type="Rhea" id="RHEA-COMP:13832"/>
        <dbReference type="ChEBI" id="CHEBI:15377"/>
        <dbReference type="ChEBI" id="CHEBI:15378"/>
        <dbReference type="ChEBI" id="CHEBI:29961"/>
        <dbReference type="ChEBI" id="CHEBI:57967"/>
        <dbReference type="ChEBI" id="CHEBI:138102"/>
    </reaction>
    <physiologicalReaction direction="left-to-right" evidence="2">
        <dbReference type="Rhea" id="RHEA:54429"/>
    </physiologicalReaction>
</comment>
<comment type="cofactor">
    <cofactor evidence="2">
        <name>Zn(2+)</name>
        <dbReference type="ChEBI" id="CHEBI:29105"/>
    </cofactor>
    <text evidence="2">Binds 1 Zn(2+) ion per subunit.</text>
</comment>
<comment type="similarity">
    <text evidence="4">Belongs to the MacroD-type family. Zn-Macro subfamily.</text>
</comment>
<gene>
    <name type="ordered locus">SAR0322</name>
</gene>
<accession>Q6GJZ1</accession>